<dbReference type="EC" id="1.15.1.1"/>
<dbReference type="EMBL" id="X95726">
    <property type="protein sequence ID" value="CAA65041.1"/>
    <property type="molecule type" value="mRNA"/>
</dbReference>
<dbReference type="SMR" id="Q42612"/>
<dbReference type="GO" id="GO:0005737">
    <property type="term" value="C:cytoplasm"/>
    <property type="evidence" value="ECO:0007669"/>
    <property type="project" value="UniProtKB-SubCell"/>
</dbReference>
<dbReference type="GO" id="GO:0005507">
    <property type="term" value="F:copper ion binding"/>
    <property type="evidence" value="ECO:0007669"/>
    <property type="project" value="InterPro"/>
</dbReference>
<dbReference type="GO" id="GO:0004784">
    <property type="term" value="F:superoxide dismutase activity"/>
    <property type="evidence" value="ECO:0007669"/>
    <property type="project" value="UniProtKB-EC"/>
</dbReference>
<dbReference type="CDD" id="cd00305">
    <property type="entry name" value="Cu-Zn_Superoxide_Dismutase"/>
    <property type="match status" value="1"/>
</dbReference>
<dbReference type="FunFam" id="2.60.40.200:FF:000001">
    <property type="entry name" value="Superoxide dismutase [Cu-Zn]"/>
    <property type="match status" value="1"/>
</dbReference>
<dbReference type="Gene3D" id="2.60.40.200">
    <property type="entry name" value="Superoxide dismutase, copper/zinc binding domain"/>
    <property type="match status" value="1"/>
</dbReference>
<dbReference type="InterPro" id="IPR036423">
    <property type="entry name" value="SOD-like_Cu/Zn_dom_sf"/>
</dbReference>
<dbReference type="InterPro" id="IPR024134">
    <property type="entry name" value="SOD_Cu/Zn_/chaperone"/>
</dbReference>
<dbReference type="InterPro" id="IPR018152">
    <property type="entry name" value="SOD_Cu/Zn_BS"/>
</dbReference>
<dbReference type="InterPro" id="IPR001424">
    <property type="entry name" value="SOD_Cu_Zn_dom"/>
</dbReference>
<dbReference type="PANTHER" id="PTHR10003">
    <property type="entry name" value="SUPEROXIDE DISMUTASE CU-ZN -RELATED"/>
    <property type="match status" value="1"/>
</dbReference>
<dbReference type="Pfam" id="PF00080">
    <property type="entry name" value="Sod_Cu"/>
    <property type="match status" value="1"/>
</dbReference>
<dbReference type="PRINTS" id="PR00068">
    <property type="entry name" value="CUZNDISMTASE"/>
</dbReference>
<dbReference type="SUPFAM" id="SSF49329">
    <property type="entry name" value="Cu,Zn superoxide dismutase-like"/>
    <property type="match status" value="1"/>
</dbReference>
<dbReference type="PROSITE" id="PS00087">
    <property type="entry name" value="SOD_CU_ZN_1"/>
    <property type="match status" value="1"/>
</dbReference>
<dbReference type="PROSITE" id="PS00332">
    <property type="entry name" value="SOD_CU_ZN_2"/>
    <property type="match status" value="1"/>
</dbReference>
<gene>
    <name type="primary">SODCC2</name>
    <name type="synonym">MSOD2</name>
</gene>
<organism>
    <name type="scientific">Brassica juncea</name>
    <name type="common">Indian mustard</name>
    <name type="synonym">Sinapis juncea</name>
    <dbReference type="NCBI Taxonomy" id="3707"/>
    <lineage>
        <taxon>Eukaryota</taxon>
        <taxon>Viridiplantae</taxon>
        <taxon>Streptophyta</taxon>
        <taxon>Embryophyta</taxon>
        <taxon>Tracheophyta</taxon>
        <taxon>Spermatophyta</taxon>
        <taxon>Magnoliopsida</taxon>
        <taxon>eudicotyledons</taxon>
        <taxon>Gunneridae</taxon>
        <taxon>Pentapetalae</taxon>
        <taxon>rosids</taxon>
        <taxon>malvids</taxon>
        <taxon>Brassicales</taxon>
        <taxon>Brassicaceae</taxon>
        <taxon>Brassiceae</taxon>
        <taxon>Brassica</taxon>
    </lineage>
</organism>
<feature type="chain" id="PRO_0000164133" description="Superoxide dismutase [Cu-Zn] 2">
    <location>
        <begin position="1"/>
        <end position="152"/>
    </location>
</feature>
<feature type="region of interest" description="Disordered" evidence="2">
    <location>
        <begin position="53"/>
        <end position="81"/>
    </location>
</feature>
<feature type="compositionally biased region" description="Basic and acidic residues" evidence="2">
    <location>
        <begin position="65"/>
        <end position="81"/>
    </location>
</feature>
<feature type="binding site" evidence="1">
    <location>
        <position position="45"/>
    </location>
    <ligand>
        <name>Cu cation</name>
        <dbReference type="ChEBI" id="CHEBI:23378"/>
        <note>catalytic</note>
    </ligand>
</feature>
<feature type="binding site" evidence="1">
    <location>
        <position position="47"/>
    </location>
    <ligand>
        <name>Cu cation</name>
        <dbReference type="ChEBI" id="CHEBI:23378"/>
        <note>catalytic</note>
    </ligand>
</feature>
<feature type="binding site" evidence="1">
    <location>
        <position position="62"/>
    </location>
    <ligand>
        <name>Cu cation</name>
        <dbReference type="ChEBI" id="CHEBI:23378"/>
        <note>catalytic</note>
    </ligand>
</feature>
<feature type="binding site" evidence="1">
    <location>
        <position position="62"/>
    </location>
    <ligand>
        <name>Zn(2+)</name>
        <dbReference type="ChEBI" id="CHEBI:29105"/>
        <note>structural</note>
    </ligand>
</feature>
<feature type="binding site" evidence="1">
    <location>
        <position position="70"/>
    </location>
    <ligand>
        <name>Zn(2+)</name>
        <dbReference type="ChEBI" id="CHEBI:29105"/>
        <note>structural</note>
    </ligand>
</feature>
<feature type="binding site" evidence="1">
    <location>
        <position position="79"/>
    </location>
    <ligand>
        <name>Zn(2+)</name>
        <dbReference type="ChEBI" id="CHEBI:29105"/>
        <note>structural</note>
    </ligand>
</feature>
<feature type="binding site" evidence="1">
    <location>
        <position position="82"/>
    </location>
    <ligand>
        <name>Zn(2+)</name>
        <dbReference type="ChEBI" id="CHEBI:29105"/>
        <note>structural</note>
    </ligand>
</feature>
<feature type="binding site" evidence="1">
    <location>
        <position position="119"/>
    </location>
    <ligand>
        <name>Cu cation</name>
        <dbReference type="ChEBI" id="CHEBI:23378"/>
        <note>catalytic</note>
    </ligand>
</feature>
<protein>
    <recommendedName>
        <fullName>Superoxide dismutase [Cu-Zn] 2</fullName>
        <ecNumber>1.15.1.1</ecNumber>
    </recommendedName>
</protein>
<evidence type="ECO:0000250" key="1"/>
<evidence type="ECO:0000256" key="2">
    <source>
        <dbReference type="SAM" id="MobiDB-lite"/>
    </source>
</evidence>
<evidence type="ECO:0000305" key="3"/>
<proteinExistence type="evidence at transcript level"/>
<name>SODC2_BRAJU</name>
<sequence>MGKGVAVLNSSEGVKGTIFFAQEGEGKTTVTGTVSGLKPGLHGFHVHALGDTTNGSMSTGPHFNPDGKQHGAPEDANRHAGDLGNIIVGDDGTATFTITDCQIPLSGPNSIVGRAVVVHADPDVLGKGGHELSLTTGNAGGRVACGIIGLQG</sequence>
<comment type="function">
    <text>Destroys radicals which are normally produced within the cells and which are toxic to biological systems.</text>
</comment>
<comment type="catalytic activity">
    <reaction>
        <text>2 superoxide + 2 H(+) = H2O2 + O2</text>
        <dbReference type="Rhea" id="RHEA:20696"/>
        <dbReference type="ChEBI" id="CHEBI:15378"/>
        <dbReference type="ChEBI" id="CHEBI:15379"/>
        <dbReference type="ChEBI" id="CHEBI:16240"/>
        <dbReference type="ChEBI" id="CHEBI:18421"/>
        <dbReference type="EC" id="1.15.1.1"/>
    </reaction>
</comment>
<comment type="cofactor">
    <cofactor evidence="1">
        <name>Cu cation</name>
        <dbReference type="ChEBI" id="CHEBI:23378"/>
    </cofactor>
    <text evidence="1">Binds 1 copper ion per subunit.</text>
</comment>
<comment type="cofactor">
    <cofactor evidence="1">
        <name>Zn(2+)</name>
        <dbReference type="ChEBI" id="CHEBI:29105"/>
    </cofactor>
    <text evidence="1">Binds 1 zinc ion per subunit.</text>
</comment>
<comment type="subunit">
    <text evidence="1">Homodimer.</text>
</comment>
<comment type="subcellular location">
    <subcellularLocation>
        <location>Cytoplasm</location>
    </subcellularLocation>
</comment>
<comment type="similarity">
    <text evidence="3">Belongs to the Cu-Zn superoxide dismutase family.</text>
</comment>
<keyword id="KW-0049">Antioxidant</keyword>
<keyword id="KW-0186">Copper</keyword>
<keyword id="KW-0963">Cytoplasm</keyword>
<keyword id="KW-0479">Metal-binding</keyword>
<keyword id="KW-0560">Oxidoreductase</keyword>
<keyword id="KW-0862">Zinc</keyword>
<accession>Q42612</accession>
<reference key="1">
    <citation type="online journal article" date="1998" name="Plant Gene Register">
        <title>Cloning of two cDNAs encoding Cu/Zn-superoxide dismutase of mustard (Brassica juncea [L.] Czern &amp; Coss).</title>
        <authorList>
            <person name="Liu J.-J."/>
            <person name="Goh C.-J."/>
            <person name="Loh C.-S."/>
            <person name="Tay E.B.H."/>
            <person name="Pua E.-C."/>
        </authorList>
        <locator>PGR98-018</locator>
    </citation>
    <scope>NUCLEOTIDE SEQUENCE [MRNA]</scope>
    <source>
        <tissue>Leaf</tissue>
    </source>
</reference>